<reference key="1">
    <citation type="submission" date="2007-02" db="EMBL/GenBank/DDBJ databases">
        <title>Complete sequence of chromosome of Shewanella baltica OS155.</title>
        <authorList>
            <consortium name="US DOE Joint Genome Institute"/>
            <person name="Copeland A."/>
            <person name="Lucas S."/>
            <person name="Lapidus A."/>
            <person name="Barry K."/>
            <person name="Detter J.C."/>
            <person name="Glavina del Rio T."/>
            <person name="Hammon N."/>
            <person name="Israni S."/>
            <person name="Dalin E."/>
            <person name="Tice H."/>
            <person name="Pitluck S."/>
            <person name="Sims D.R."/>
            <person name="Brettin T."/>
            <person name="Bruce D."/>
            <person name="Han C."/>
            <person name="Tapia R."/>
            <person name="Brainard J."/>
            <person name="Schmutz J."/>
            <person name="Larimer F."/>
            <person name="Land M."/>
            <person name="Hauser L."/>
            <person name="Kyrpides N."/>
            <person name="Mikhailova N."/>
            <person name="Brettar I."/>
            <person name="Klappenbach J."/>
            <person name="Konstantinidis K."/>
            <person name="Rodrigues J."/>
            <person name="Tiedje J."/>
            <person name="Richardson P."/>
        </authorList>
    </citation>
    <scope>NUCLEOTIDE SEQUENCE [LARGE SCALE GENOMIC DNA]</scope>
    <source>
        <strain>OS155 / ATCC BAA-1091</strain>
    </source>
</reference>
<feature type="chain" id="PRO_1000069403" description="Bifunctional protein HldE">
    <location>
        <begin position="1"/>
        <end position="476"/>
    </location>
</feature>
<feature type="region of interest" description="Ribokinase">
    <location>
        <begin position="1"/>
        <end position="319"/>
    </location>
</feature>
<feature type="region of interest" description="Cytidylyltransferase">
    <location>
        <begin position="345"/>
        <end position="476"/>
    </location>
</feature>
<feature type="active site" evidence="1">
    <location>
        <position position="264"/>
    </location>
</feature>
<feature type="binding site" evidence="1">
    <location>
        <begin position="195"/>
        <end position="198"/>
    </location>
    <ligand>
        <name>ATP</name>
        <dbReference type="ChEBI" id="CHEBI:30616"/>
    </ligand>
</feature>
<dbReference type="EC" id="2.7.1.167" evidence="1"/>
<dbReference type="EC" id="2.7.7.70" evidence="1"/>
<dbReference type="EMBL" id="CP000563">
    <property type="protein sequence ID" value="ABN62900.1"/>
    <property type="molecule type" value="Genomic_DNA"/>
</dbReference>
<dbReference type="RefSeq" id="WP_011847651.1">
    <property type="nucleotide sequence ID" value="NC_009052.1"/>
</dbReference>
<dbReference type="SMR" id="A3D837"/>
<dbReference type="STRING" id="325240.Sbal_3423"/>
<dbReference type="KEGG" id="sbl:Sbal_3423"/>
<dbReference type="HOGENOM" id="CLU_021150_2_1_6"/>
<dbReference type="OrthoDB" id="9802794at2"/>
<dbReference type="UniPathway" id="UPA00356">
    <property type="reaction ID" value="UER00437"/>
</dbReference>
<dbReference type="UniPathway" id="UPA00356">
    <property type="reaction ID" value="UER00439"/>
</dbReference>
<dbReference type="Proteomes" id="UP000001557">
    <property type="component" value="Chromosome"/>
</dbReference>
<dbReference type="GO" id="GO:0005829">
    <property type="term" value="C:cytosol"/>
    <property type="evidence" value="ECO:0007669"/>
    <property type="project" value="TreeGrafter"/>
</dbReference>
<dbReference type="GO" id="GO:0005524">
    <property type="term" value="F:ATP binding"/>
    <property type="evidence" value="ECO:0007669"/>
    <property type="project" value="UniProtKB-UniRule"/>
</dbReference>
<dbReference type="GO" id="GO:0033785">
    <property type="term" value="F:heptose 7-phosphate kinase activity"/>
    <property type="evidence" value="ECO:0007669"/>
    <property type="project" value="UniProtKB-UniRule"/>
</dbReference>
<dbReference type="GO" id="GO:0033786">
    <property type="term" value="F:heptose-1-phosphate adenylyltransferase activity"/>
    <property type="evidence" value="ECO:0007669"/>
    <property type="project" value="UniProtKB-UniRule"/>
</dbReference>
<dbReference type="GO" id="GO:0016773">
    <property type="term" value="F:phosphotransferase activity, alcohol group as acceptor"/>
    <property type="evidence" value="ECO:0007669"/>
    <property type="project" value="InterPro"/>
</dbReference>
<dbReference type="GO" id="GO:0097171">
    <property type="term" value="P:ADP-L-glycero-beta-D-manno-heptose biosynthetic process"/>
    <property type="evidence" value="ECO:0007669"/>
    <property type="project" value="UniProtKB-UniPathway"/>
</dbReference>
<dbReference type="CDD" id="cd01172">
    <property type="entry name" value="RfaE_like"/>
    <property type="match status" value="1"/>
</dbReference>
<dbReference type="FunFam" id="3.40.1190.20:FF:000002">
    <property type="entry name" value="Bifunctional protein HldE"/>
    <property type="match status" value="1"/>
</dbReference>
<dbReference type="FunFam" id="3.40.50.620:FF:000028">
    <property type="entry name" value="Bifunctional protein HldE"/>
    <property type="match status" value="1"/>
</dbReference>
<dbReference type="Gene3D" id="3.40.1190.20">
    <property type="match status" value="1"/>
</dbReference>
<dbReference type="Gene3D" id="3.40.50.620">
    <property type="entry name" value="HUPs"/>
    <property type="match status" value="1"/>
</dbReference>
<dbReference type="HAMAP" id="MF_01603">
    <property type="entry name" value="HldE"/>
    <property type="match status" value="1"/>
</dbReference>
<dbReference type="InterPro" id="IPR023030">
    <property type="entry name" value="Bifunc_HldE"/>
</dbReference>
<dbReference type="InterPro" id="IPR002173">
    <property type="entry name" value="Carboh/pur_kinase_PfkB_CS"/>
</dbReference>
<dbReference type="InterPro" id="IPR004821">
    <property type="entry name" value="Cyt_trans-like"/>
</dbReference>
<dbReference type="InterPro" id="IPR011611">
    <property type="entry name" value="PfkB_dom"/>
</dbReference>
<dbReference type="InterPro" id="IPR011913">
    <property type="entry name" value="RfaE_dom_I"/>
</dbReference>
<dbReference type="InterPro" id="IPR011914">
    <property type="entry name" value="RfaE_dom_II"/>
</dbReference>
<dbReference type="InterPro" id="IPR029056">
    <property type="entry name" value="Ribokinase-like"/>
</dbReference>
<dbReference type="InterPro" id="IPR014729">
    <property type="entry name" value="Rossmann-like_a/b/a_fold"/>
</dbReference>
<dbReference type="NCBIfam" id="TIGR00125">
    <property type="entry name" value="cyt_tran_rel"/>
    <property type="match status" value="1"/>
</dbReference>
<dbReference type="NCBIfam" id="NF008454">
    <property type="entry name" value="PRK11316.1"/>
    <property type="match status" value="1"/>
</dbReference>
<dbReference type="NCBIfam" id="TIGR02198">
    <property type="entry name" value="rfaE_dom_I"/>
    <property type="match status" value="1"/>
</dbReference>
<dbReference type="NCBIfam" id="TIGR02199">
    <property type="entry name" value="rfaE_dom_II"/>
    <property type="match status" value="1"/>
</dbReference>
<dbReference type="PANTHER" id="PTHR46969">
    <property type="entry name" value="BIFUNCTIONAL PROTEIN HLDE"/>
    <property type="match status" value="1"/>
</dbReference>
<dbReference type="PANTHER" id="PTHR46969:SF1">
    <property type="entry name" value="BIFUNCTIONAL PROTEIN HLDE"/>
    <property type="match status" value="1"/>
</dbReference>
<dbReference type="Pfam" id="PF01467">
    <property type="entry name" value="CTP_transf_like"/>
    <property type="match status" value="1"/>
</dbReference>
<dbReference type="Pfam" id="PF00294">
    <property type="entry name" value="PfkB"/>
    <property type="match status" value="1"/>
</dbReference>
<dbReference type="SUPFAM" id="SSF52374">
    <property type="entry name" value="Nucleotidylyl transferase"/>
    <property type="match status" value="1"/>
</dbReference>
<dbReference type="SUPFAM" id="SSF53613">
    <property type="entry name" value="Ribokinase-like"/>
    <property type="match status" value="1"/>
</dbReference>
<dbReference type="PROSITE" id="PS00583">
    <property type="entry name" value="PFKB_KINASES_1"/>
    <property type="match status" value="1"/>
</dbReference>
<dbReference type="PROSITE" id="PS00584">
    <property type="entry name" value="PFKB_KINASES_2"/>
    <property type="match status" value="1"/>
</dbReference>
<accession>A3D837</accession>
<name>HLDE_SHEB5</name>
<gene>
    <name evidence="1" type="primary">hldE</name>
    <name type="ordered locus">Sbal_3423</name>
</gene>
<comment type="function">
    <text evidence="1">Catalyzes the phosphorylation of D-glycero-D-manno-heptose 7-phosphate at the C-1 position to selectively form D-glycero-beta-D-manno-heptose-1,7-bisphosphate.</text>
</comment>
<comment type="function">
    <text evidence="1">Catalyzes the ADP transfer from ATP to D-glycero-beta-D-manno-heptose 1-phosphate, yielding ADP-D-glycero-beta-D-manno-heptose.</text>
</comment>
<comment type="catalytic activity">
    <reaction evidence="1">
        <text>D-glycero-beta-D-manno-heptose 7-phosphate + ATP = D-glycero-beta-D-manno-heptose 1,7-bisphosphate + ADP + H(+)</text>
        <dbReference type="Rhea" id="RHEA:27473"/>
        <dbReference type="ChEBI" id="CHEBI:15378"/>
        <dbReference type="ChEBI" id="CHEBI:30616"/>
        <dbReference type="ChEBI" id="CHEBI:60204"/>
        <dbReference type="ChEBI" id="CHEBI:60208"/>
        <dbReference type="ChEBI" id="CHEBI:456216"/>
        <dbReference type="EC" id="2.7.1.167"/>
    </reaction>
</comment>
<comment type="catalytic activity">
    <reaction evidence="1">
        <text>D-glycero-beta-D-manno-heptose 1-phosphate + ATP + H(+) = ADP-D-glycero-beta-D-manno-heptose + diphosphate</text>
        <dbReference type="Rhea" id="RHEA:27465"/>
        <dbReference type="ChEBI" id="CHEBI:15378"/>
        <dbReference type="ChEBI" id="CHEBI:30616"/>
        <dbReference type="ChEBI" id="CHEBI:33019"/>
        <dbReference type="ChEBI" id="CHEBI:59967"/>
        <dbReference type="ChEBI" id="CHEBI:61593"/>
        <dbReference type="EC" id="2.7.7.70"/>
    </reaction>
</comment>
<comment type="pathway">
    <text evidence="1">Nucleotide-sugar biosynthesis; ADP-L-glycero-beta-D-manno-heptose biosynthesis; ADP-L-glycero-beta-D-manno-heptose from D-glycero-beta-D-manno-heptose 7-phosphate: step 1/4.</text>
</comment>
<comment type="pathway">
    <text evidence="1">Nucleotide-sugar biosynthesis; ADP-L-glycero-beta-D-manno-heptose biosynthesis; ADP-L-glycero-beta-D-manno-heptose from D-glycero-beta-D-manno-heptose 7-phosphate: step 3/4.</text>
</comment>
<comment type="subunit">
    <text evidence="1">Homodimer.</text>
</comment>
<comment type="similarity">
    <text evidence="1">In the N-terminal section; belongs to the carbohydrate kinase PfkB family.</text>
</comment>
<comment type="similarity">
    <text evidence="1">In the C-terminal section; belongs to the cytidylyltransferase family.</text>
</comment>
<protein>
    <recommendedName>
        <fullName evidence="1">Bifunctional protein HldE</fullName>
    </recommendedName>
    <domain>
        <recommendedName>
            <fullName evidence="1">D-beta-D-heptose 7-phosphate kinase</fullName>
            <ecNumber evidence="1">2.7.1.167</ecNumber>
        </recommendedName>
        <alternativeName>
            <fullName evidence="1">D-beta-D-heptose 7-phosphotransferase</fullName>
        </alternativeName>
        <alternativeName>
            <fullName evidence="1">D-glycero-beta-D-manno-heptose-7-phosphate kinase</fullName>
        </alternativeName>
    </domain>
    <domain>
        <recommendedName>
            <fullName evidence="1">D-beta-D-heptose 1-phosphate adenylyltransferase</fullName>
            <ecNumber evidence="1">2.7.7.70</ecNumber>
        </recommendedName>
        <alternativeName>
            <fullName evidence="1">D-glycero-beta-D-manno-heptose 1-phosphate adenylyltransferase</fullName>
        </alternativeName>
    </domain>
</protein>
<sequence>MKVSLPAFEKARVLVVGDVMLDRYWVGPTGRISPEAPVPVVKINQVEDRPGGAANVALNIATLGGQVQLAGLVGQDDTAHALTLGVQTLGVEPQWLTIADKPTITKLRVLSRNQQLIRLDFEEAFDKADSVRLLKQSEALLDSVDVVVLSDYAKGAIDQPRDFIALARAKGVMVLVDPKGSDFGRYQGASLITPNMSEFEAVVGTVTSEADLLEKARGLLKQHHFDAILVTRSEKGMTLVTTNAPELHIPTVAREVYDVTGAGDTVISALATSLAAGADLPQACAIANTAAGVVVGKLGTSTVSRIELIEALALHHGESGFGVVSEDQLAYALEQAKLRGERVVMTNGCFDILHAGHVSYLKQAKALGDRLIVAVNDDASVKRLKGDGRPVNQVDRRMAVLAGLASVDWVVPFSEDTPQRIITRLLPNLLVKGGDYKLEDIAGGAEVIAAGGQVQVLGFEDGISTTAIIQNIMANQ</sequence>
<keyword id="KW-0067">ATP-binding</keyword>
<keyword id="KW-0119">Carbohydrate metabolism</keyword>
<keyword id="KW-0418">Kinase</keyword>
<keyword id="KW-0511">Multifunctional enzyme</keyword>
<keyword id="KW-0547">Nucleotide-binding</keyword>
<keyword id="KW-0548">Nucleotidyltransferase</keyword>
<keyword id="KW-1185">Reference proteome</keyword>
<keyword id="KW-0808">Transferase</keyword>
<evidence type="ECO:0000255" key="1">
    <source>
        <dbReference type="HAMAP-Rule" id="MF_01603"/>
    </source>
</evidence>
<organism>
    <name type="scientific">Shewanella baltica (strain OS155 / ATCC BAA-1091)</name>
    <dbReference type="NCBI Taxonomy" id="325240"/>
    <lineage>
        <taxon>Bacteria</taxon>
        <taxon>Pseudomonadati</taxon>
        <taxon>Pseudomonadota</taxon>
        <taxon>Gammaproteobacteria</taxon>
        <taxon>Alteromonadales</taxon>
        <taxon>Shewanellaceae</taxon>
        <taxon>Shewanella</taxon>
    </lineage>
</organism>
<proteinExistence type="inferred from homology"/>